<gene>
    <name type="primary">mocos</name>
    <name type="ORF">zgc:110784</name>
</gene>
<proteinExistence type="evidence at transcript level"/>
<dbReference type="EC" id="2.8.1.9" evidence="2"/>
<dbReference type="EMBL" id="BX323467">
    <property type="status" value="NOT_ANNOTATED_CDS"/>
    <property type="molecule type" value="Genomic_DNA"/>
</dbReference>
<dbReference type="EMBL" id="CR759794">
    <property type="status" value="NOT_ANNOTATED_CDS"/>
    <property type="molecule type" value="Genomic_DNA"/>
</dbReference>
<dbReference type="EMBL" id="BC091876">
    <property type="protein sequence ID" value="AAH91876.1"/>
    <property type="molecule type" value="mRNA"/>
</dbReference>
<dbReference type="EMBL" id="BC129285">
    <property type="protein sequence ID" value="AAI29286.1"/>
    <property type="molecule type" value="mRNA"/>
</dbReference>
<dbReference type="SMR" id="A2VD33"/>
<dbReference type="FunCoup" id="A2VD33">
    <property type="interactions" value="897"/>
</dbReference>
<dbReference type="AGR" id="ZFIN:ZDB-GENE-050327-94"/>
<dbReference type="ZFIN" id="ZDB-GENE-050327-94">
    <property type="gene designation" value="mocos"/>
</dbReference>
<dbReference type="InParanoid" id="A2VD33"/>
<dbReference type="PhylomeDB" id="A2VD33"/>
<dbReference type="Reactome" id="R-DRE-947581">
    <property type="pathway name" value="Molybdenum cofactor biosynthesis"/>
</dbReference>
<dbReference type="UniPathway" id="UPA00344"/>
<dbReference type="PRO" id="PR:A2VD33"/>
<dbReference type="Proteomes" id="UP000000437">
    <property type="component" value="Unplaced"/>
</dbReference>
<dbReference type="GO" id="GO:0016829">
    <property type="term" value="F:lyase activity"/>
    <property type="evidence" value="ECO:0007669"/>
    <property type="project" value="UniProtKB-UniRule"/>
</dbReference>
<dbReference type="GO" id="GO:0008265">
    <property type="term" value="F:molybdenum cofactor sulfurtransferase activity"/>
    <property type="evidence" value="ECO:0000250"/>
    <property type="project" value="UniProtKB"/>
</dbReference>
<dbReference type="GO" id="GO:0030151">
    <property type="term" value="F:molybdenum ion binding"/>
    <property type="evidence" value="ECO:0007669"/>
    <property type="project" value="UniProtKB-UniRule"/>
</dbReference>
<dbReference type="GO" id="GO:0030170">
    <property type="term" value="F:pyridoxal phosphate binding"/>
    <property type="evidence" value="ECO:0007669"/>
    <property type="project" value="UniProtKB-UniRule"/>
</dbReference>
<dbReference type="GO" id="GO:0006777">
    <property type="term" value="P:Mo-molybdopterin cofactor biosynthetic process"/>
    <property type="evidence" value="ECO:0007669"/>
    <property type="project" value="UniProtKB-UniRule"/>
</dbReference>
<dbReference type="GO" id="GO:0043545">
    <property type="term" value="P:molybdopterin cofactor metabolic process"/>
    <property type="evidence" value="ECO:0000250"/>
    <property type="project" value="UniProtKB"/>
</dbReference>
<dbReference type="Gene3D" id="3.40.640.10">
    <property type="entry name" value="Type I PLP-dependent aspartate aminotransferase-like (Major domain)"/>
    <property type="match status" value="1"/>
</dbReference>
<dbReference type="HAMAP" id="MF_03050">
    <property type="entry name" value="MOCOS"/>
    <property type="match status" value="1"/>
</dbReference>
<dbReference type="InterPro" id="IPR000192">
    <property type="entry name" value="Aminotrans_V_dom"/>
</dbReference>
<dbReference type="InterPro" id="IPR005302">
    <property type="entry name" value="MoCF_Sase_C"/>
</dbReference>
<dbReference type="InterPro" id="IPR028886">
    <property type="entry name" value="MoCo_sulfurase"/>
</dbReference>
<dbReference type="InterPro" id="IPR005303">
    <property type="entry name" value="MOCOS_middle"/>
</dbReference>
<dbReference type="InterPro" id="IPR015424">
    <property type="entry name" value="PyrdxlP-dep_Trfase"/>
</dbReference>
<dbReference type="InterPro" id="IPR015421">
    <property type="entry name" value="PyrdxlP-dep_Trfase_major"/>
</dbReference>
<dbReference type="InterPro" id="IPR011037">
    <property type="entry name" value="Pyrv_Knase-like_insert_dom_sf"/>
</dbReference>
<dbReference type="PANTHER" id="PTHR14237:SF19">
    <property type="entry name" value="MITOCHONDRIAL AMIDOXIME REDUCING COMPONENT 1"/>
    <property type="match status" value="1"/>
</dbReference>
<dbReference type="PANTHER" id="PTHR14237">
    <property type="entry name" value="MOLYBDOPTERIN COFACTOR SULFURASE MOSC"/>
    <property type="match status" value="1"/>
</dbReference>
<dbReference type="Pfam" id="PF00266">
    <property type="entry name" value="Aminotran_5"/>
    <property type="match status" value="1"/>
</dbReference>
<dbReference type="Pfam" id="PF03473">
    <property type="entry name" value="MOSC"/>
    <property type="match status" value="1"/>
</dbReference>
<dbReference type="Pfam" id="PF03476">
    <property type="entry name" value="MOSC_N"/>
    <property type="match status" value="1"/>
</dbReference>
<dbReference type="SUPFAM" id="SSF141673">
    <property type="entry name" value="MOSC N-terminal domain-like"/>
    <property type="match status" value="1"/>
</dbReference>
<dbReference type="SUPFAM" id="SSF50800">
    <property type="entry name" value="PK beta-barrel domain-like"/>
    <property type="match status" value="1"/>
</dbReference>
<dbReference type="SUPFAM" id="SSF53383">
    <property type="entry name" value="PLP-dependent transferases"/>
    <property type="match status" value="1"/>
</dbReference>
<dbReference type="PROSITE" id="PS51340">
    <property type="entry name" value="MOSC"/>
    <property type="match status" value="1"/>
</dbReference>
<sequence>MDTRSLQDFQDLCTFDVFKSFGHYYGYGVDQQALIDQEFKRIKGVTYLDHAGTTLFPESLIKGFHDDISRNVYGNPHSHNSSSRLTHDTVESVRYKILAHFNTSPEDYSVIFTSGCTAALKLVADTFPWKPMSNKEPGSQFCYLTDNHTSVVGIRGATALQGVGTISVSPREVETRARNKTQTNGEEECSTPHLFCYPAQSNFSGRKYSLSYVKGIQSQQLYPACEHHGQWFVLLDAACFVSCSPLDLSQYPADFVPISFYKMFGFPTGLGALLVRNEAAEVLRKTYFGGGTAAAYLVEENYFIPKPNLASRFEDGTISFLDIISLHHGFETLQKLTGSMTNIQLHTFGLARYTYTVLSCLCHSNGKHVAQIYCDNDFQSIAEQGAIINFSLLDCHGRTVGYSQVDKMASLFNIHIRTGCFCNTGACQHYLAISNQNVKSNLHAGHICGDNIDLVDGRPTGSLRVSFGYMSSFEDCQNFLRFVVNCFVDKPLILDQTKLAKLNSAAPIEPSSSYSPSPDRMAVSEVTMSKDGKKDGSSCTLTNLFIFPVKSCASFEVTEWPLGPQGLLYDRLWMVVNENGVCLSQKREPKLCLIQPVVCLAANTLKLQISGSEAITVPLDPSLEKSDLRTSQSKVCGDRVQTVDCGEEVSAWLSEFLGKPCRLIRQRPEFLRDMKFGQGDCCPTPLSLVNEAQFLLINRASVCFLQEAIANRYNSDNEETWRDTEQLVQRFRANLVISAQEPFAEDNWSHLTIGNTQFQVIGKCGRCQMIGVDQKTATRTQEPLRSLSECRSGKVTFGVYLAHQSARNSTHPVLSIGSHVIPKISDSTDKF</sequence>
<feature type="chain" id="PRO_0000369362" description="Molybdenum cofactor sulfurase">
    <location>
        <begin position="1"/>
        <end position="831"/>
    </location>
</feature>
<feature type="domain" description="MOSC" evidence="2">
    <location>
        <begin position="651"/>
        <end position="823"/>
    </location>
</feature>
<feature type="active site" evidence="2">
    <location>
        <position position="422"/>
    </location>
</feature>
<feature type="modified residue" description="N6-(pyridoxal phosphate)lysine" evidence="2">
    <location>
        <position position="262"/>
    </location>
</feature>
<feature type="sequence conflict" description="In Ref. 2; AAH91876." evidence="3" ref="2">
    <original>S</original>
    <variation>P</variation>
    <location>
        <position position="69"/>
    </location>
</feature>
<organism>
    <name type="scientific">Danio rerio</name>
    <name type="common">Zebrafish</name>
    <name type="synonym">Brachydanio rerio</name>
    <dbReference type="NCBI Taxonomy" id="7955"/>
    <lineage>
        <taxon>Eukaryota</taxon>
        <taxon>Metazoa</taxon>
        <taxon>Chordata</taxon>
        <taxon>Craniata</taxon>
        <taxon>Vertebrata</taxon>
        <taxon>Euteleostomi</taxon>
        <taxon>Actinopterygii</taxon>
        <taxon>Neopterygii</taxon>
        <taxon>Teleostei</taxon>
        <taxon>Ostariophysi</taxon>
        <taxon>Cypriniformes</taxon>
        <taxon>Danionidae</taxon>
        <taxon>Danioninae</taxon>
        <taxon>Danio</taxon>
    </lineage>
</organism>
<reference key="1">
    <citation type="journal article" date="2013" name="Nature">
        <title>The zebrafish reference genome sequence and its relationship to the human genome.</title>
        <authorList>
            <person name="Howe K."/>
            <person name="Clark M.D."/>
            <person name="Torroja C.F."/>
            <person name="Torrance J."/>
            <person name="Berthelot C."/>
            <person name="Muffato M."/>
            <person name="Collins J.E."/>
            <person name="Humphray S."/>
            <person name="McLaren K."/>
            <person name="Matthews L."/>
            <person name="McLaren S."/>
            <person name="Sealy I."/>
            <person name="Caccamo M."/>
            <person name="Churcher C."/>
            <person name="Scott C."/>
            <person name="Barrett J.C."/>
            <person name="Koch R."/>
            <person name="Rauch G.J."/>
            <person name="White S."/>
            <person name="Chow W."/>
            <person name="Kilian B."/>
            <person name="Quintais L.T."/>
            <person name="Guerra-Assuncao J.A."/>
            <person name="Zhou Y."/>
            <person name="Gu Y."/>
            <person name="Yen J."/>
            <person name="Vogel J.H."/>
            <person name="Eyre T."/>
            <person name="Redmond S."/>
            <person name="Banerjee R."/>
            <person name="Chi J."/>
            <person name="Fu B."/>
            <person name="Langley E."/>
            <person name="Maguire S.F."/>
            <person name="Laird G.K."/>
            <person name="Lloyd D."/>
            <person name="Kenyon E."/>
            <person name="Donaldson S."/>
            <person name="Sehra H."/>
            <person name="Almeida-King J."/>
            <person name="Loveland J."/>
            <person name="Trevanion S."/>
            <person name="Jones M."/>
            <person name="Quail M."/>
            <person name="Willey D."/>
            <person name="Hunt A."/>
            <person name="Burton J."/>
            <person name="Sims S."/>
            <person name="McLay K."/>
            <person name="Plumb B."/>
            <person name="Davis J."/>
            <person name="Clee C."/>
            <person name="Oliver K."/>
            <person name="Clark R."/>
            <person name="Riddle C."/>
            <person name="Elliot D."/>
            <person name="Threadgold G."/>
            <person name="Harden G."/>
            <person name="Ware D."/>
            <person name="Begum S."/>
            <person name="Mortimore B."/>
            <person name="Kerry G."/>
            <person name="Heath P."/>
            <person name="Phillimore B."/>
            <person name="Tracey A."/>
            <person name="Corby N."/>
            <person name="Dunn M."/>
            <person name="Johnson C."/>
            <person name="Wood J."/>
            <person name="Clark S."/>
            <person name="Pelan S."/>
            <person name="Griffiths G."/>
            <person name="Smith M."/>
            <person name="Glithero R."/>
            <person name="Howden P."/>
            <person name="Barker N."/>
            <person name="Lloyd C."/>
            <person name="Stevens C."/>
            <person name="Harley J."/>
            <person name="Holt K."/>
            <person name="Panagiotidis G."/>
            <person name="Lovell J."/>
            <person name="Beasley H."/>
            <person name="Henderson C."/>
            <person name="Gordon D."/>
            <person name="Auger K."/>
            <person name="Wright D."/>
            <person name="Collins J."/>
            <person name="Raisen C."/>
            <person name="Dyer L."/>
            <person name="Leung K."/>
            <person name="Robertson L."/>
            <person name="Ambridge K."/>
            <person name="Leongamornlert D."/>
            <person name="McGuire S."/>
            <person name="Gilderthorp R."/>
            <person name="Griffiths C."/>
            <person name="Manthravadi D."/>
            <person name="Nichol S."/>
            <person name="Barker G."/>
            <person name="Whitehead S."/>
            <person name="Kay M."/>
            <person name="Brown J."/>
            <person name="Murnane C."/>
            <person name="Gray E."/>
            <person name="Humphries M."/>
            <person name="Sycamore N."/>
            <person name="Barker D."/>
            <person name="Saunders D."/>
            <person name="Wallis J."/>
            <person name="Babbage A."/>
            <person name="Hammond S."/>
            <person name="Mashreghi-Mohammadi M."/>
            <person name="Barr L."/>
            <person name="Martin S."/>
            <person name="Wray P."/>
            <person name="Ellington A."/>
            <person name="Matthews N."/>
            <person name="Ellwood M."/>
            <person name="Woodmansey R."/>
            <person name="Clark G."/>
            <person name="Cooper J."/>
            <person name="Tromans A."/>
            <person name="Grafham D."/>
            <person name="Skuce C."/>
            <person name="Pandian R."/>
            <person name="Andrews R."/>
            <person name="Harrison E."/>
            <person name="Kimberley A."/>
            <person name="Garnett J."/>
            <person name="Fosker N."/>
            <person name="Hall R."/>
            <person name="Garner P."/>
            <person name="Kelly D."/>
            <person name="Bird C."/>
            <person name="Palmer S."/>
            <person name="Gehring I."/>
            <person name="Berger A."/>
            <person name="Dooley C.M."/>
            <person name="Ersan-Urun Z."/>
            <person name="Eser C."/>
            <person name="Geiger H."/>
            <person name="Geisler M."/>
            <person name="Karotki L."/>
            <person name="Kirn A."/>
            <person name="Konantz J."/>
            <person name="Konantz M."/>
            <person name="Oberlander M."/>
            <person name="Rudolph-Geiger S."/>
            <person name="Teucke M."/>
            <person name="Lanz C."/>
            <person name="Raddatz G."/>
            <person name="Osoegawa K."/>
            <person name="Zhu B."/>
            <person name="Rapp A."/>
            <person name="Widaa S."/>
            <person name="Langford C."/>
            <person name="Yang F."/>
            <person name="Schuster S.C."/>
            <person name="Carter N.P."/>
            <person name="Harrow J."/>
            <person name="Ning Z."/>
            <person name="Herrero J."/>
            <person name="Searle S.M."/>
            <person name="Enright A."/>
            <person name="Geisler R."/>
            <person name="Plasterk R.H."/>
            <person name="Lee C."/>
            <person name="Westerfield M."/>
            <person name="de Jong P.J."/>
            <person name="Zon L.I."/>
            <person name="Postlethwait J.H."/>
            <person name="Nusslein-Volhard C."/>
            <person name="Hubbard T.J."/>
            <person name="Roest Crollius H."/>
            <person name="Rogers J."/>
            <person name="Stemple D.L."/>
        </authorList>
    </citation>
    <scope>NUCLEOTIDE SEQUENCE [LARGE SCALE GENOMIC DNA]</scope>
    <source>
        <strain>Tuebingen</strain>
    </source>
</reference>
<reference key="2">
    <citation type="submission" date="2006-12" db="EMBL/GenBank/DDBJ databases">
        <authorList>
            <consortium name="NIH - Zebrafish Gene Collection (ZGC) project"/>
        </authorList>
    </citation>
    <scope>NUCLEOTIDE SEQUENCE [LARGE SCALE MRNA]</scope>
    <source>
        <tissue>Embryo</tissue>
        <tissue>Intestine</tissue>
    </source>
</reference>
<keyword id="KW-0501">Molybdenum cofactor biosynthesis</keyword>
<keyword id="KW-0663">Pyridoxal phosphate</keyword>
<keyword id="KW-1185">Reference proteome</keyword>
<keyword id="KW-0808">Transferase</keyword>
<evidence type="ECO:0000250" key="1">
    <source>
        <dbReference type="UniProtKB" id="Q96EN8"/>
    </source>
</evidence>
<evidence type="ECO:0000255" key="2">
    <source>
        <dbReference type="HAMAP-Rule" id="MF_03050"/>
    </source>
</evidence>
<evidence type="ECO:0000305" key="3"/>
<accession>A2VD33</accession>
<accession>Q58EJ4</accession>
<comment type="function">
    <text evidence="2">Sulfurates the molybdenum cofactor. Sulfation of molybdenum is essential for xanthine dehydrogenase (XDH) and aldehyde oxidase (ADO) enzymes in which molybdenum cofactor is liganded by 1 oxygen and 1 sulfur atom in active form.</text>
</comment>
<comment type="catalytic activity">
    <reaction evidence="2">
        <text>Mo-molybdopterin + L-cysteine + AH2 = thio-Mo-molybdopterin + L-alanine + A + H2O</text>
        <dbReference type="Rhea" id="RHEA:42636"/>
        <dbReference type="ChEBI" id="CHEBI:13193"/>
        <dbReference type="ChEBI" id="CHEBI:15377"/>
        <dbReference type="ChEBI" id="CHEBI:17499"/>
        <dbReference type="ChEBI" id="CHEBI:35235"/>
        <dbReference type="ChEBI" id="CHEBI:57972"/>
        <dbReference type="ChEBI" id="CHEBI:71302"/>
        <dbReference type="ChEBI" id="CHEBI:82685"/>
        <dbReference type="EC" id="2.8.1.9"/>
    </reaction>
</comment>
<comment type="cofactor">
    <cofactor evidence="2">
        <name>pyridoxal 5'-phosphate</name>
        <dbReference type="ChEBI" id="CHEBI:597326"/>
    </cofactor>
</comment>
<comment type="pathway">
    <text evidence="1">Cofactor biosynthesis; molybdopterin biosynthesis.</text>
</comment>
<comment type="similarity">
    <text evidence="2">Belongs to the class-V pyridoxal-phosphate-dependent aminotransferase family. MOCOS subfamily.</text>
</comment>
<protein>
    <recommendedName>
        <fullName evidence="2">Molybdenum cofactor sulfurase</fullName>
        <shortName evidence="2">MCS</shortName>
        <shortName evidence="2">MOS</shortName>
        <shortName evidence="2">MoCo sulfurase</shortName>
        <ecNumber evidence="2">2.8.1.9</ecNumber>
    </recommendedName>
    <alternativeName>
        <fullName evidence="2">Molybdenum cofactor sulfurtransferase</fullName>
    </alternativeName>
</protein>
<name>MOCOS_DANRE</name>